<protein>
    <recommendedName>
        <fullName>Actin</fullName>
        <ecNumber evidence="1">3.6.4.-</ecNumber>
    </recommendedName>
</protein>
<comment type="function">
    <text>Actins are highly conserved proteins that are involved in various types of cell motility and are ubiquitously expressed in all eukaryotic cells.</text>
</comment>
<comment type="catalytic activity">
    <reaction evidence="1">
        <text>ATP + H2O = ADP + phosphate + H(+)</text>
        <dbReference type="Rhea" id="RHEA:13065"/>
        <dbReference type="ChEBI" id="CHEBI:15377"/>
        <dbReference type="ChEBI" id="CHEBI:15378"/>
        <dbReference type="ChEBI" id="CHEBI:30616"/>
        <dbReference type="ChEBI" id="CHEBI:43474"/>
        <dbReference type="ChEBI" id="CHEBI:456216"/>
    </reaction>
</comment>
<comment type="subcellular location">
    <subcellularLocation>
        <location>Cytoplasm</location>
        <location>Cytoskeleton</location>
    </subcellularLocation>
</comment>
<comment type="similarity">
    <text evidence="2">Belongs to the actin family.</text>
</comment>
<comment type="sequence caution" evidence="2">
    <conflict type="erroneous initiation">
        <sequence resource="EMBL-CDS" id="AFR92615"/>
    </conflict>
    <text>Extended N-terminus.</text>
</comment>
<keyword id="KW-0067">ATP-binding</keyword>
<keyword id="KW-0963">Cytoplasm</keyword>
<keyword id="KW-0206">Cytoskeleton</keyword>
<keyword id="KW-0378">Hydrolase</keyword>
<keyword id="KW-0547">Nucleotide-binding</keyword>
<name>ACT_CRYNH</name>
<evidence type="ECO:0000250" key="1">
    <source>
        <dbReference type="UniProtKB" id="P60010"/>
    </source>
</evidence>
<evidence type="ECO:0000305" key="2"/>
<dbReference type="EC" id="3.6.4.-" evidence="1"/>
<dbReference type="EMBL" id="U10867">
    <property type="protein sequence ID" value="AAC49074.1"/>
    <property type="molecule type" value="Genomic_DNA"/>
</dbReference>
<dbReference type="EMBL" id="CP003820">
    <property type="protein sequence ID" value="AFR92615.2"/>
    <property type="status" value="ALT_INIT"/>
    <property type="molecule type" value="Genomic_DNA"/>
</dbReference>
<dbReference type="RefSeq" id="XP_012046325.1">
    <property type="nucleotide sequence ID" value="XM_012190935.1"/>
</dbReference>
<dbReference type="SMR" id="P48465"/>
<dbReference type="SwissPalm" id="P48465"/>
<dbReference type="EnsemblFungi" id="AAW41026">
    <property type="protein sequence ID" value="AAW41026"/>
    <property type="gene ID" value="CNA04650"/>
</dbReference>
<dbReference type="GeneID" id="23884285"/>
<dbReference type="KEGG" id="cng:CNAG_00483"/>
<dbReference type="HOGENOM" id="CLU_027965_0_2_1"/>
<dbReference type="OrthoDB" id="409at5206"/>
<dbReference type="Proteomes" id="UP000010091">
    <property type="component" value="Chromosome 1"/>
</dbReference>
<dbReference type="GO" id="GO:0005737">
    <property type="term" value="C:cytoplasm"/>
    <property type="evidence" value="ECO:0007669"/>
    <property type="project" value="UniProtKB-KW"/>
</dbReference>
<dbReference type="GO" id="GO:0005856">
    <property type="term" value="C:cytoskeleton"/>
    <property type="evidence" value="ECO:0007669"/>
    <property type="project" value="UniProtKB-SubCell"/>
</dbReference>
<dbReference type="GO" id="GO:0005524">
    <property type="term" value="F:ATP binding"/>
    <property type="evidence" value="ECO:0007669"/>
    <property type="project" value="UniProtKB-KW"/>
</dbReference>
<dbReference type="GO" id="GO:0016787">
    <property type="term" value="F:hydrolase activity"/>
    <property type="evidence" value="ECO:0007669"/>
    <property type="project" value="UniProtKB-KW"/>
</dbReference>
<dbReference type="CDD" id="cd10224">
    <property type="entry name" value="ASKHA_NBD_actin"/>
    <property type="match status" value="1"/>
</dbReference>
<dbReference type="FunFam" id="3.30.420.40:FF:000131">
    <property type="entry name" value="Actin, alpha skeletal muscle"/>
    <property type="match status" value="1"/>
</dbReference>
<dbReference type="FunFam" id="3.30.420.40:FF:000291">
    <property type="entry name" value="Actin, alpha skeletal muscle"/>
    <property type="match status" value="1"/>
</dbReference>
<dbReference type="FunFam" id="3.90.640.10:FF:000001">
    <property type="entry name" value="Actin, muscle"/>
    <property type="match status" value="1"/>
</dbReference>
<dbReference type="FunFam" id="3.30.420.40:FF:000058">
    <property type="entry name" value="Putative actin-related protein 5"/>
    <property type="match status" value="1"/>
</dbReference>
<dbReference type="Gene3D" id="3.30.420.40">
    <property type="match status" value="2"/>
</dbReference>
<dbReference type="Gene3D" id="3.90.640.10">
    <property type="entry name" value="Actin, Chain A, domain 4"/>
    <property type="match status" value="1"/>
</dbReference>
<dbReference type="InterPro" id="IPR004000">
    <property type="entry name" value="Actin"/>
</dbReference>
<dbReference type="InterPro" id="IPR020902">
    <property type="entry name" value="Actin/actin-like_CS"/>
</dbReference>
<dbReference type="InterPro" id="IPR004001">
    <property type="entry name" value="Actin_CS"/>
</dbReference>
<dbReference type="InterPro" id="IPR043129">
    <property type="entry name" value="ATPase_NBD"/>
</dbReference>
<dbReference type="PANTHER" id="PTHR11937">
    <property type="entry name" value="ACTIN"/>
    <property type="match status" value="1"/>
</dbReference>
<dbReference type="Pfam" id="PF00022">
    <property type="entry name" value="Actin"/>
    <property type="match status" value="1"/>
</dbReference>
<dbReference type="PRINTS" id="PR00190">
    <property type="entry name" value="ACTIN"/>
</dbReference>
<dbReference type="SMART" id="SM00268">
    <property type="entry name" value="ACTIN"/>
    <property type="match status" value="1"/>
</dbReference>
<dbReference type="SUPFAM" id="SSF53067">
    <property type="entry name" value="Actin-like ATPase domain"/>
    <property type="match status" value="2"/>
</dbReference>
<dbReference type="PROSITE" id="PS00406">
    <property type="entry name" value="ACTINS_1"/>
    <property type="match status" value="1"/>
</dbReference>
<dbReference type="PROSITE" id="PS00432">
    <property type="entry name" value="ACTINS_2"/>
    <property type="match status" value="1"/>
</dbReference>
<dbReference type="PROSITE" id="PS01132">
    <property type="entry name" value="ACTINS_ACT_LIKE"/>
    <property type="match status" value="1"/>
</dbReference>
<accession>P48465</accession>
<accession>J9VLP4</accession>
<reference key="1">
    <citation type="journal article" date="1995" name="J. Med. Vet. Mycol.">
        <title>The actin gene from Cryptococcus neoformans: structure and phylogenetic analysis.</title>
        <authorList>
            <person name="Cox G.M."/>
            <person name="Rude T."/>
            <person name="Perfect J.R."/>
        </authorList>
    </citation>
    <scope>NUCLEOTIDE SEQUENCE [GENOMIC DNA]</scope>
    <source>
        <strain>H99 / ATCC 208821 / CBS 10515 / FGSC 9487</strain>
    </source>
</reference>
<reference key="2">
    <citation type="journal article" date="2014" name="PLoS Genet.">
        <title>Analysis of the genome and transcriptome of Cryptococcus neoformans var. grubii reveals complex RNA expression and microevolution leading to virulence attenuation.</title>
        <authorList>
            <person name="Janbon G."/>
            <person name="Ormerod K.L."/>
            <person name="Paulet D."/>
            <person name="Byrnes E.J. III"/>
            <person name="Yadav V."/>
            <person name="Chatterjee G."/>
            <person name="Mullapudi N."/>
            <person name="Hon C.-C."/>
            <person name="Billmyre R.B."/>
            <person name="Brunel F."/>
            <person name="Bahn Y.-S."/>
            <person name="Chen W."/>
            <person name="Chen Y."/>
            <person name="Chow E.W.L."/>
            <person name="Coppee J.-Y."/>
            <person name="Floyd-Averette A."/>
            <person name="Gaillardin C."/>
            <person name="Gerik K.J."/>
            <person name="Goldberg J."/>
            <person name="Gonzalez-Hilarion S."/>
            <person name="Gujja S."/>
            <person name="Hamlin J.L."/>
            <person name="Hsueh Y.-P."/>
            <person name="Ianiri G."/>
            <person name="Jones S."/>
            <person name="Kodira C.D."/>
            <person name="Kozubowski L."/>
            <person name="Lam W."/>
            <person name="Marra M."/>
            <person name="Mesner L.D."/>
            <person name="Mieczkowski P.A."/>
            <person name="Moyrand F."/>
            <person name="Nielsen K."/>
            <person name="Proux C."/>
            <person name="Rossignol T."/>
            <person name="Schein J.E."/>
            <person name="Sun S."/>
            <person name="Wollschlaeger C."/>
            <person name="Wood I.A."/>
            <person name="Zeng Q."/>
            <person name="Neuveglise C."/>
            <person name="Newlon C.S."/>
            <person name="Perfect J.R."/>
            <person name="Lodge J.K."/>
            <person name="Idnurm A."/>
            <person name="Stajich J.E."/>
            <person name="Kronstad J.W."/>
            <person name="Sanyal K."/>
            <person name="Heitman J."/>
            <person name="Fraser J.A."/>
            <person name="Cuomo C.A."/>
            <person name="Dietrich F.S."/>
        </authorList>
    </citation>
    <scope>NUCLEOTIDE SEQUENCE [LARGE SCALE GENOMIC DNA]</scope>
    <source>
        <strain>H99 / ATCC 208821 / CBS 10515 / FGSC 9487</strain>
    </source>
</reference>
<gene>
    <name type="ORF">CNAG_00483</name>
</gene>
<feature type="chain" id="PRO_0000088917" description="Actin">
    <location>
        <begin position="1"/>
        <end position="375"/>
    </location>
</feature>
<feature type="sequence conflict" description="In Ref. 1; AAC49074." evidence="2" ref="1">
    <original>EH</original>
    <variation>DD</variation>
    <location>
        <begin position="100"/>
        <end position="101"/>
    </location>
</feature>
<feature type="sequence conflict" description="In Ref. 1; AAC49074." evidence="2" ref="1">
    <original>T</original>
    <variation>S</variation>
    <location>
        <position position="126"/>
    </location>
</feature>
<feature type="sequence conflict" description="In Ref. 1; AAC49074." evidence="2" ref="1">
    <original>F</original>
    <variation>C</variation>
    <location>
        <position position="223"/>
    </location>
</feature>
<proteinExistence type="inferred from homology"/>
<sequence>MEEEVAALVIDNGSGMCKAGFAGDDAPRAVFPSIVGRPRHQGVMVGMGQKDSYVGDEAQSKRGILTLKYPIEHGIVTNWDDMEKIWHHTFYNELRVAPEEHPVLLTEAPLNPKQNREKMTQIMFETFNAPAFYVSIQAVLSLYASGRTTGIVLDSGDGVTHTVPIYEGFSLPHAILRIDLAGRDLTDYLVKILMERGYLFTTSAEREIVRDIKEKLCYVALDFEQELQTAAQSSQLEKSYELPDGQVITIGNERFRCPEALFQPSLLGLEAAGIHETTYNSIMKCDLDIRKDLYGNIVMSGGTTMYNGIADRMQKEITALAPSSMKVKIVSPPERKYSVWIGGSILASLSTFQQMWIAKSEYDESGPSIVHRKCF</sequence>
<organism>
    <name type="scientific">Cryptococcus neoformans var. grubii serotype A (strain H99 / ATCC 208821 / CBS 10515 / FGSC 9487)</name>
    <name type="common">Filobasidiella neoformans var. grubii</name>
    <dbReference type="NCBI Taxonomy" id="235443"/>
    <lineage>
        <taxon>Eukaryota</taxon>
        <taxon>Fungi</taxon>
        <taxon>Dikarya</taxon>
        <taxon>Basidiomycota</taxon>
        <taxon>Agaricomycotina</taxon>
        <taxon>Tremellomycetes</taxon>
        <taxon>Tremellales</taxon>
        <taxon>Cryptococcaceae</taxon>
        <taxon>Cryptococcus</taxon>
        <taxon>Cryptococcus neoformans species complex</taxon>
    </lineage>
</organism>